<organism>
    <name type="scientific">Coxiella burnetii (strain CbuG_Q212)</name>
    <name type="common">Coxiella burnetii (strain Q212)</name>
    <dbReference type="NCBI Taxonomy" id="434923"/>
    <lineage>
        <taxon>Bacteria</taxon>
        <taxon>Pseudomonadati</taxon>
        <taxon>Pseudomonadota</taxon>
        <taxon>Gammaproteobacteria</taxon>
        <taxon>Legionellales</taxon>
        <taxon>Coxiellaceae</taxon>
        <taxon>Coxiella</taxon>
    </lineage>
</organism>
<gene>
    <name evidence="1" type="primary">ubiG</name>
    <name type="ordered locus">CbuG_1657</name>
</gene>
<comment type="function">
    <text evidence="1">O-methyltransferase that catalyzes the 2 O-methylation steps in the ubiquinone biosynthetic pathway.</text>
</comment>
<comment type="catalytic activity">
    <reaction evidence="1">
        <text>a 3-demethylubiquinol + S-adenosyl-L-methionine = a ubiquinol + S-adenosyl-L-homocysteine + H(+)</text>
        <dbReference type="Rhea" id="RHEA:44380"/>
        <dbReference type="Rhea" id="RHEA-COMP:9566"/>
        <dbReference type="Rhea" id="RHEA-COMP:10914"/>
        <dbReference type="ChEBI" id="CHEBI:15378"/>
        <dbReference type="ChEBI" id="CHEBI:17976"/>
        <dbReference type="ChEBI" id="CHEBI:57856"/>
        <dbReference type="ChEBI" id="CHEBI:59789"/>
        <dbReference type="ChEBI" id="CHEBI:84422"/>
        <dbReference type="EC" id="2.1.1.64"/>
    </reaction>
</comment>
<comment type="catalytic activity">
    <reaction evidence="1">
        <text>a 3-(all-trans-polyprenyl)benzene-1,2-diol + S-adenosyl-L-methionine = a 2-methoxy-6-(all-trans-polyprenyl)phenol + S-adenosyl-L-homocysteine + H(+)</text>
        <dbReference type="Rhea" id="RHEA:31411"/>
        <dbReference type="Rhea" id="RHEA-COMP:9550"/>
        <dbReference type="Rhea" id="RHEA-COMP:9551"/>
        <dbReference type="ChEBI" id="CHEBI:15378"/>
        <dbReference type="ChEBI" id="CHEBI:57856"/>
        <dbReference type="ChEBI" id="CHEBI:59789"/>
        <dbReference type="ChEBI" id="CHEBI:62729"/>
        <dbReference type="ChEBI" id="CHEBI:62731"/>
        <dbReference type="EC" id="2.1.1.222"/>
    </reaction>
</comment>
<comment type="pathway">
    <text evidence="1">Cofactor biosynthesis; ubiquinone biosynthesis.</text>
</comment>
<comment type="similarity">
    <text evidence="1">Belongs to the methyltransferase superfamily. UbiG/COQ3 family.</text>
</comment>
<reference key="1">
    <citation type="journal article" date="2009" name="Infect. Immun.">
        <title>Comparative genomics reveal extensive transposon-mediated genomic plasticity and diversity among potential effector proteins within the genus Coxiella.</title>
        <authorList>
            <person name="Beare P.A."/>
            <person name="Unsworth N."/>
            <person name="Andoh M."/>
            <person name="Voth D.E."/>
            <person name="Omsland A."/>
            <person name="Gilk S.D."/>
            <person name="Williams K.P."/>
            <person name="Sobral B.W."/>
            <person name="Kupko J.J. III"/>
            <person name="Porcella S.F."/>
            <person name="Samuel J.E."/>
            <person name="Heinzen R.A."/>
        </authorList>
    </citation>
    <scope>NUCLEOTIDE SEQUENCE [LARGE SCALE GENOMIC DNA]</scope>
    <source>
        <strain>CbuG_Q212</strain>
    </source>
</reference>
<dbReference type="EC" id="2.1.1.222" evidence="1"/>
<dbReference type="EC" id="2.1.1.64" evidence="1"/>
<dbReference type="EMBL" id="CP001019">
    <property type="protein sequence ID" value="ACJ18940.1"/>
    <property type="molecule type" value="Genomic_DNA"/>
</dbReference>
<dbReference type="RefSeq" id="WP_010957522.1">
    <property type="nucleotide sequence ID" value="NC_011527.1"/>
</dbReference>
<dbReference type="SMR" id="B6J1W2"/>
<dbReference type="KEGG" id="cbg:CbuG_1657"/>
<dbReference type="HOGENOM" id="CLU_042432_5_0_6"/>
<dbReference type="UniPathway" id="UPA00232"/>
<dbReference type="GO" id="GO:0102208">
    <property type="term" value="F:2-polyprenyl-6-hydroxyphenol methylase activity"/>
    <property type="evidence" value="ECO:0007669"/>
    <property type="project" value="UniProtKB-EC"/>
</dbReference>
<dbReference type="GO" id="GO:0061542">
    <property type="term" value="F:3-demethylubiquinol 3-O-methyltransferase activity"/>
    <property type="evidence" value="ECO:0007669"/>
    <property type="project" value="UniProtKB-UniRule"/>
</dbReference>
<dbReference type="GO" id="GO:0010420">
    <property type="term" value="F:polyprenyldihydroxybenzoate methyltransferase activity"/>
    <property type="evidence" value="ECO:0007669"/>
    <property type="project" value="InterPro"/>
</dbReference>
<dbReference type="GO" id="GO:0032259">
    <property type="term" value="P:methylation"/>
    <property type="evidence" value="ECO:0007669"/>
    <property type="project" value="UniProtKB-KW"/>
</dbReference>
<dbReference type="CDD" id="cd02440">
    <property type="entry name" value="AdoMet_MTases"/>
    <property type="match status" value="1"/>
</dbReference>
<dbReference type="FunFam" id="3.40.50.150:FF:000028">
    <property type="entry name" value="Ubiquinone biosynthesis O-methyltransferase"/>
    <property type="match status" value="1"/>
</dbReference>
<dbReference type="Gene3D" id="3.40.50.150">
    <property type="entry name" value="Vaccinia Virus protein VP39"/>
    <property type="match status" value="1"/>
</dbReference>
<dbReference type="HAMAP" id="MF_00472">
    <property type="entry name" value="UbiG"/>
    <property type="match status" value="1"/>
</dbReference>
<dbReference type="InterPro" id="IPR029063">
    <property type="entry name" value="SAM-dependent_MTases_sf"/>
</dbReference>
<dbReference type="InterPro" id="IPR010233">
    <property type="entry name" value="UbiG_MeTrfase"/>
</dbReference>
<dbReference type="NCBIfam" id="TIGR01983">
    <property type="entry name" value="UbiG"/>
    <property type="match status" value="1"/>
</dbReference>
<dbReference type="PANTHER" id="PTHR43464">
    <property type="entry name" value="METHYLTRANSFERASE"/>
    <property type="match status" value="1"/>
</dbReference>
<dbReference type="PANTHER" id="PTHR43464:SF19">
    <property type="entry name" value="UBIQUINONE BIOSYNTHESIS O-METHYLTRANSFERASE, MITOCHONDRIAL"/>
    <property type="match status" value="1"/>
</dbReference>
<dbReference type="Pfam" id="PF13489">
    <property type="entry name" value="Methyltransf_23"/>
    <property type="match status" value="1"/>
</dbReference>
<dbReference type="SUPFAM" id="SSF53335">
    <property type="entry name" value="S-adenosyl-L-methionine-dependent methyltransferases"/>
    <property type="match status" value="1"/>
</dbReference>
<name>UBIG_COXB2</name>
<protein>
    <recommendedName>
        <fullName evidence="1">Ubiquinone biosynthesis O-methyltransferase</fullName>
    </recommendedName>
    <alternativeName>
        <fullName evidence="1">2-polyprenyl-6-hydroxyphenol methylase</fullName>
        <ecNumber evidence="1">2.1.1.222</ecNumber>
    </alternativeName>
    <alternativeName>
        <fullName evidence="1">3-demethylubiquinone 3-O-methyltransferase</fullName>
        <ecNumber evidence="1">2.1.1.64</ecNumber>
    </alternativeName>
</protein>
<keyword id="KW-0489">Methyltransferase</keyword>
<keyword id="KW-0949">S-adenosyl-L-methionine</keyword>
<keyword id="KW-0808">Transferase</keyword>
<keyword id="KW-0831">Ubiquinone biosynthesis</keyword>
<evidence type="ECO:0000255" key="1">
    <source>
        <dbReference type="HAMAP-Rule" id="MF_00472"/>
    </source>
</evidence>
<feature type="chain" id="PRO_1000199675" description="Ubiquinone biosynthesis O-methyltransferase">
    <location>
        <begin position="1"/>
        <end position="234"/>
    </location>
</feature>
<feature type="binding site" evidence="1">
    <location>
        <position position="40"/>
    </location>
    <ligand>
        <name>S-adenosyl-L-methionine</name>
        <dbReference type="ChEBI" id="CHEBI:59789"/>
    </ligand>
</feature>
<feature type="binding site" evidence="1">
    <location>
        <position position="59"/>
    </location>
    <ligand>
        <name>S-adenosyl-L-methionine</name>
        <dbReference type="ChEBI" id="CHEBI:59789"/>
    </ligand>
</feature>
<feature type="binding site" evidence="1">
    <location>
        <position position="80"/>
    </location>
    <ligand>
        <name>S-adenosyl-L-methionine</name>
        <dbReference type="ChEBI" id="CHEBI:59789"/>
    </ligand>
</feature>
<feature type="binding site" evidence="1">
    <location>
        <position position="123"/>
    </location>
    <ligand>
        <name>S-adenosyl-L-methionine</name>
        <dbReference type="ChEBI" id="CHEBI:59789"/>
    </ligand>
</feature>
<proteinExistence type="inferred from homology"/>
<accession>B6J1W2</accession>
<sequence>MTLSEQNIDKEELAKFSDLAQDWWNPAGKMKPLHLINPVRLKYIEQQITLKGKHVLDVGCGGGLLSEALAKHGAIVTGVDMSESLIDVAKNHAEQQQLNINYQCQDIEILTKDAQRFDIITCMELLEHVPDPQRMIKNCAALIKPGGKLFFSTINRNFKAYLYTIVGAEYVFNLLPKGTHDYAQFIRPSELTQWAESGGLRLLDITGIHYHPLKNEFDLSRDVSVNYLACFTHE</sequence>